<proteinExistence type="inferred from homology"/>
<feature type="chain" id="PRO_0000366877" description="Eukaryotic translation initiation factor 3 subunit B">
    <location>
        <begin position="1"/>
        <end position="738"/>
    </location>
</feature>
<feature type="domain" description="RRM" evidence="1">
    <location>
        <begin position="59"/>
        <end position="146"/>
    </location>
</feature>
<feature type="repeat" description="WD 1">
    <location>
        <begin position="211"/>
        <end position="250"/>
    </location>
</feature>
<feature type="repeat" description="WD 2">
    <location>
        <begin position="322"/>
        <end position="360"/>
    </location>
</feature>
<feature type="repeat" description="WD 3">
    <location>
        <begin position="363"/>
        <end position="406"/>
    </location>
</feature>
<feature type="repeat" description="WD 4">
    <location>
        <begin position="537"/>
        <end position="579"/>
    </location>
</feature>
<feature type="region of interest" description="Sufficient for interaction with PIC8" evidence="1">
    <location>
        <begin position="1"/>
        <end position="245"/>
    </location>
</feature>
<feature type="region of interest" description="Sufficient for interaction with HCR1 and TIF32" evidence="1">
    <location>
        <begin position="1"/>
        <end position="120"/>
    </location>
</feature>
<name>EIF3B_PICGU</name>
<comment type="function">
    <text evidence="1">RNA-binding component of the eukaryotic translation initiation factor 3 (eIF-3) complex, which is involved in protein synthesis of a specialized repertoire of mRNAs and, together with other initiation factors, stimulates binding of mRNA and methionyl-tRNAi to the 40S ribosome. The eIF-3 complex specifically targets and initiates translation of a subset of mRNAs involved in cell proliferation.</text>
</comment>
<comment type="subunit">
    <text evidence="1">Component of the eukaryotic translation initiation factor 3 (eIF-3) complex.</text>
</comment>
<comment type="subcellular location">
    <subcellularLocation>
        <location evidence="1">Cytoplasm</location>
    </subcellularLocation>
</comment>
<comment type="similarity">
    <text evidence="1">Belongs to the eIF-3 subunit B family.</text>
</comment>
<organism>
    <name type="scientific">Meyerozyma guilliermondii (strain ATCC 6260 / CBS 566 / DSM 6381 / JCM 1539 / NBRC 10279 / NRRL Y-324)</name>
    <name type="common">Yeast</name>
    <name type="synonym">Candida guilliermondii</name>
    <dbReference type="NCBI Taxonomy" id="294746"/>
    <lineage>
        <taxon>Eukaryota</taxon>
        <taxon>Fungi</taxon>
        <taxon>Dikarya</taxon>
        <taxon>Ascomycota</taxon>
        <taxon>Saccharomycotina</taxon>
        <taxon>Pichiomycetes</taxon>
        <taxon>Debaryomycetaceae</taxon>
        <taxon>Meyerozyma</taxon>
    </lineage>
</organism>
<reference key="1">
    <citation type="journal article" date="2009" name="Nature">
        <title>Evolution of pathogenicity and sexual reproduction in eight Candida genomes.</title>
        <authorList>
            <person name="Butler G."/>
            <person name="Rasmussen M.D."/>
            <person name="Lin M.F."/>
            <person name="Santos M.A.S."/>
            <person name="Sakthikumar S."/>
            <person name="Munro C.A."/>
            <person name="Rheinbay E."/>
            <person name="Grabherr M."/>
            <person name="Forche A."/>
            <person name="Reedy J.L."/>
            <person name="Agrafioti I."/>
            <person name="Arnaud M.B."/>
            <person name="Bates S."/>
            <person name="Brown A.J.P."/>
            <person name="Brunke S."/>
            <person name="Costanzo M.C."/>
            <person name="Fitzpatrick D.A."/>
            <person name="de Groot P.W.J."/>
            <person name="Harris D."/>
            <person name="Hoyer L.L."/>
            <person name="Hube B."/>
            <person name="Klis F.M."/>
            <person name="Kodira C."/>
            <person name="Lennard N."/>
            <person name="Logue M.E."/>
            <person name="Martin R."/>
            <person name="Neiman A.M."/>
            <person name="Nikolaou E."/>
            <person name="Quail M.A."/>
            <person name="Quinn J."/>
            <person name="Santos M.C."/>
            <person name="Schmitzberger F.F."/>
            <person name="Sherlock G."/>
            <person name="Shah P."/>
            <person name="Silverstein K.A.T."/>
            <person name="Skrzypek M.S."/>
            <person name="Soll D."/>
            <person name="Staggs R."/>
            <person name="Stansfield I."/>
            <person name="Stumpf M.P.H."/>
            <person name="Sudbery P.E."/>
            <person name="Srikantha T."/>
            <person name="Zeng Q."/>
            <person name="Berman J."/>
            <person name="Berriman M."/>
            <person name="Heitman J."/>
            <person name="Gow N.A.R."/>
            <person name="Lorenz M.C."/>
            <person name="Birren B.W."/>
            <person name="Kellis M."/>
            <person name="Cuomo C.A."/>
        </authorList>
    </citation>
    <scope>NUCLEOTIDE SEQUENCE [LARGE SCALE GENOMIC DNA]</scope>
    <source>
        <strain>ATCC 6260 / CBS 566 / DSM 6381 / JCM 1539 / NBRC 10279 / NRRL Y-324</strain>
    </source>
</reference>
<accession>A5DR43</accession>
<keyword id="KW-0963">Cytoplasm</keyword>
<keyword id="KW-0396">Initiation factor</keyword>
<keyword id="KW-0648">Protein biosynthesis</keyword>
<keyword id="KW-1185">Reference proteome</keyword>
<keyword id="KW-0677">Repeat</keyword>
<keyword id="KW-0694">RNA-binding</keyword>
<keyword id="KW-0853">WD repeat</keyword>
<dbReference type="EMBL" id="CH408162">
    <property type="protein sequence ID" value="EDK41646.2"/>
    <property type="molecule type" value="Genomic_DNA"/>
</dbReference>
<dbReference type="RefSeq" id="XP_001481981.1">
    <property type="nucleotide sequence ID" value="XM_001481931.1"/>
</dbReference>
<dbReference type="SMR" id="A5DR43"/>
<dbReference type="FunCoup" id="A5DR43">
    <property type="interactions" value="1328"/>
</dbReference>
<dbReference type="STRING" id="294746.A5DR43"/>
<dbReference type="GeneID" id="5123881"/>
<dbReference type="KEGG" id="pgu:PGUG_05744"/>
<dbReference type="VEuPathDB" id="FungiDB:PGUG_05744"/>
<dbReference type="eggNOG" id="KOG2314">
    <property type="taxonomic scope" value="Eukaryota"/>
</dbReference>
<dbReference type="HOGENOM" id="CLU_011152_4_0_1"/>
<dbReference type="InParanoid" id="A5DR43"/>
<dbReference type="OMA" id="LWGGPQF"/>
<dbReference type="OrthoDB" id="10250414at2759"/>
<dbReference type="Proteomes" id="UP000001997">
    <property type="component" value="Unassembled WGS sequence"/>
</dbReference>
<dbReference type="GO" id="GO:0010494">
    <property type="term" value="C:cytoplasmic stress granule"/>
    <property type="evidence" value="ECO:0007669"/>
    <property type="project" value="EnsemblFungi"/>
</dbReference>
<dbReference type="GO" id="GO:0016282">
    <property type="term" value="C:eukaryotic 43S preinitiation complex"/>
    <property type="evidence" value="ECO:0007669"/>
    <property type="project" value="UniProtKB-UniRule"/>
</dbReference>
<dbReference type="GO" id="GO:0033290">
    <property type="term" value="C:eukaryotic 48S preinitiation complex"/>
    <property type="evidence" value="ECO:0007669"/>
    <property type="project" value="UniProtKB-UniRule"/>
</dbReference>
<dbReference type="GO" id="GO:0071540">
    <property type="term" value="C:eukaryotic translation initiation factor 3 complex, eIF3e"/>
    <property type="evidence" value="ECO:0007669"/>
    <property type="project" value="EnsemblFungi"/>
</dbReference>
<dbReference type="GO" id="GO:0071541">
    <property type="term" value="C:eukaryotic translation initiation factor 3 complex, eIF3m"/>
    <property type="evidence" value="ECO:0007669"/>
    <property type="project" value="EnsemblFungi"/>
</dbReference>
<dbReference type="GO" id="GO:0043614">
    <property type="term" value="C:multi-eIF complex"/>
    <property type="evidence" value="ECO:0007669"/>
    <property type="project" value="EnsemblFungi"/>
</dbReference>
<dbReference type="GO" id="GO:0042802">
    <property type="term" value="F:identical protein binding"/>
    <property type="evidence" value="ECO:0007669"/>
    <property type="project" value="EnsemblFungi"/>
</dbReference>
<dbReference type="GO" id="GO:0003723">
    <property type="term" value="F:RNA binding"/>
    <property type="evidence" value="ECO:0007669"/>
    <property type="project" value="UniProtKB-UniRule"/>
</dbReference>
<dbReference type="GO" id="GO:0003743">
    <property type="term" value="F:translation initiation factor activity"/>
    <property type="evidence" value="ECO:0007669"/>
    <property type="project" value="UniProtKB-UniRule"/>
</dbReference>
<dbReference type="GO" id="GO:0031369">
    <property type="term" value="F:translation initiation factor binding"/>
    <property type="evidence" value="ECO:0007669"/>
    <property type="project" value="InterPro"/>
</dbReference>
<dbReference type="GO" id="GO:0001732">
    <property type="term" value="P:formation of cytoplasmic translation initiation complex"/>
    <property type="evidence" value="ECO:0007669"/>
    <property type="project" value="UniProtKB-UniRule"/>
</dbReference>
<dbReference type="CDD" id="cd12278">
    <property type="entry name" value="RRM_eIF3B"/>
    <property type="match status" value="1"/>
</dbReference>
<dbReference type="FunFam" id="3.30.70.330:FF:000235">
    <property type="entry name" value="Eukaryotic translation initiation factor 3 subunit B"/>
    <property type="match status" value="1"/>
</dbReference>
<dbReference type="Gene3D" id="3.30.70.330">
    <property type="match status" value="1"/>
</dbReference>
<dbReference type="Gene3D" id="2.130.10.10">
    <property type="entry name" value="YVTN repeat-like/Quinoprotein amine dehydrogenase"/>
    <property type="match status" value="1"/>
</dbReference>
<dbReference type="HAMAP" id="MF_03001">
    <property type="entry name" value="eIF3b"/>
    <property type="match status" value="1"/>
</dbReference>
<dbReference type="InterPro" id="IPR011400">
    <property type="entry name" value="EIF3B"/>
</dbReference>
<dbReference type="InterPro" id="IPR034363">
    <property type="entry name" value="eIF3B_RRM"/>
</dbReference>
<dbReference type="InterPro" id="IPR012677">
    <property type="entry name" value="Nucleotide-bd_a/b_plait_sf"/>
</dbReference>
<dbReference type="InterPro" id="IPR035979">
    <property type="entry name" value="RBD_domain_sf"/>
</dbReference>
<dbReference type="InterPro" id="IPR000504">
    <property type="entry name" value="RRM_dom"/>
</dbReference>
<dbReference type="InterPro" id="IPR013979">
    <property type="entry name" value="TIF_beta_prop-like"/>
</dbReference>
<dbReference type="InterPro" id="IPR015943">
    <property type="entry name" value="WD40/YVTN_repeat-like_dom_sf"/>
</dbReference>
<dbReference type="PANTHER" id="PTHR14068">
    <property type="entry name" value="EUKARYOTIC TRANSLATION INITIATION FACTOR 3 EIF3 -RELATED"/>
    <property type="match status" value="1"/>
</dbReference>
<dbReference type="PANTHER" id="PTHR14068:SF0">
    <property type="entry name" value="EUKARYOTIC TRANSLATION INITIATION FACTOR 3 SUBUNIT B"/>
    <property type="match status" value="1"/>
</dbReference>
<dbReference type="Pfam" id="PF08662">
    <property type="entry name" value="eIF2A"/>
    <property type="match status" value="1"/>
</dbReference>
<dbReference type="Pfam" id="PF00076">
    <property type="entry name" value="RRM_1"/>
    <property type="match status" value="1"/>
</dbReference>
<dbReference type="PIRSF" id="PIRSF036424">
    <property type="entry name" value="eIF3b"/>
    <property type="match status" value="1"/>
</dbReference>
<dbReference type="SMART" id="SM00360">
    <property type="entry name" value="RRM"/>
    <property type="match status" value="1"/>
</dbReference>
<dbReference type="SUPFAM" id="SSF82171">
    <property type="entry name" value="DPP6 N-terminal domain-like"/>
    <property type="match status" value="1"/>
</dbReference>
<dbReference type="SUPFAM" id="SSF54928">
    <property type="entry name" value="RNA-binding domain, RBD"/>
    <property type="match status" value="1"/>
</dbReference>
<dbReference type="PROSITE" id="PS50102">
    <property type="entry name" value="RRM"/>
    <property type="match status" value="1"/>
</dbReference>
<evidence type="ECO:0000255" key="1">
    <source>
        <dbReference type="HAMAP-Rule" id="MF_03001"/>
    </source>
</evidence>
<protein>
    <recommendedName>
        <fullName evidence="1">Eukaryotic translation initiation factor 3 subunit B</fullName>
        <shortName evidence="1">eIF3b</shortName>
    </recommendedName>
    <alternativeName>
        <fullName evidence="1">Eukaryotic translation initiation factor 3 90 kDa subunit homolog</fullName>
        <shortName evidence="1">eIF3 p90</shortName>
    </alternativeName>
    <alternativeName>
        <fullName evidence="1">Translation initiation factor eIF3, p90 subunit homolog</fullName>
    </alternativeName>
</protein>
<sequence>MCGCVGVISNVDENFQVKTIVTMSDIDYEALEKEVPLDDIDFSDLEEQYAVKPDFGIDNFVVVDGAPIAPEAKVPVLIKVLKKLFSTVGEIVEGEEGIHMPLEDGKSKGFLFIQFKTAQMADAAIQQMHGKKLDQKHRLLVNKLSDIEKYGIEGNVPTEFKEPEIPPFKSHGYLKSWLQDEQGRDQIGLHYSDTFGVYWNKRKSPEPVIEPRKGFTSKYAKFSPKGTYLFSIHPQGIQSWGGAQFESISKFIHSQVRLIDFSPNEKYLVTLSPQPIQVPENPAERASYPFGPESNGHKLVIWDLATSEPARTFALPPHLEGQKEMPWPLVKWSHDDKYCARQGPGALAIYETPSFQLLDKKLVKIDDIVDFEWAPAPVYLDTSSQNGPGEHVLSYWTPESSNQTARVALMQIPSRQVLRTINLFQVSDCKMHWQDEAKYLCVKVDRHTKSGKTIFSNLEFFKVTERDIPVEKLELKEVVINFAWEPRSDRFVTISRLDDGALNPAIPKNTIAFYAPETSKTKGGAITSSKYKAFETVVDKHSNTVYWSPKGRFVVIATLARSNGELEFYDCTYEEENVRTTSKNNVKLLKSEKFSGMTNLAWDPSGRFVAAWSSSWIHTIENGYKMFEFTGNMLRDESIDNFNEFLWRPRPPSMLNAADRKKVRKNLRTYSAQFEEADAMEADAATRQLILTRRKQLEEWRAYRAKHASAGHQKKEDKMTVIEEIKEEIIEEKEEIVE</sequence>
<gene>
    <name evidence="1" type="primary">PRT1</name>
    <name type="ORF">PGUG_05744</name>
</gene>